<dbReference type="EMBL" id="AF093139">
    <property type="protein sequence ID" value="AAC63367.1"/>
    <property type="molecule type" value="mRNA"/>
</dbReference>
<dbReference type="RefSeq" id="NP_067590.1">
    <property type="nucleotide sequence ID" value="NM_021579.1"/>
</dbReference>
<dbReference type="BMRB" id="O88984"/>
<dbReference type="SMR" id="O88984"/>
<dbReference type="BioGRID" id="248722">
    <property type="interactions" value="1"/>
</dbReference>
<dbReference type="FunCoup" id="O88984">
    <property type="interactions" value="2880"/>
</dbReference>
<dbReference type="STRING" id="10116.ENSRNOP00000026033"/>
<dbReference type="GlyGen" id="O88984">
    <property type="glycosylation" value="2 sites"/>
</dbReference>
<dbReference type="iPTMnet" id="O88984"/>
<dbReference type="PhosphoSitePlus" id="O88984"/>
<dbReference type="jPOST" id="O88984"/>
<dbReference type="PaxDb" id="10116-ENSRNOP00000026033"/>
<dbReference type="GeneID" id="59087"/>
<dbReference type="KEGG" id="rno:59087"/>
<dbReference type="UCSC" id="RGD:62014">
    <property type="organism name" value="rat"/>
</dbReference>
<dbReference type="AGR" id="RGD:62014"/>
<dbReference type="CTD" id="10482"/>
<dbReference type="RGD" id="62014">
    <property type="gene designation" value="Nxf1"/>
</dbReference>
<dbReference type="eggNOG" id="KOG3763">
    <property type="taxonomic scope" value="Eukaryota"/>
</dbReference>
<dbReference type="InParanoid" id="O88984"/>
<dbReference type="PhylomeDB" id="O88984"/>
<dbReference type="Reactome" id="R-RNO-159227">
    <property type="pathway name" value="Transport of the SLBP independent Mature mRNA"/>
</dbReference>
<dbReference type="Reactome" id="R-RNO-159230">
    <property type="pathway name" value="Transport of the SLBP Dependant Mature mRNA"/>
</dbReference>
<dbReference type="Reactome" id="R-RNO-159231">
    <property type="pathway name" value="Transport of Mature mRNA Derived from an Intronless Transcript"/>
</dbReference>
<dbReference type="Reactome" id="R-RNO-159236">
    <property type="pathway name" value="Transport of Mature mRNA derived from an Intron-Containing Transcript"/>
</dbReference>
<dbReference type="PRO" id="PR:O88984"/>
<dbReference type="Proteomes" id="UP000002494">
    <property type="component" value="Unplaced"/>
</dbReference>
<dbReference type="GO" id="GO:0005737">
    <property type="term" value="C:cytoplasm"/>
    <property type="evidence" value="ECO:0000266"/>
    <property type="project" value="RGD"/>
</dbReference>
<dbReference type="GO" id="GO:0010494">
    <property type="term" value="C:cytoplasmic stress granule"/>
    <property type="evidence" value="ECO:0007669"/>
    <property type="project" value="UniProtKB-SubCell"/>
</dbReference>
<dbReference type="GO" id="GO:0042405">
    <property type="term" value="C:nuclear inclusion body"/>
    <property type="evidence" value="ECO:0000266"/>
    <property type="project" value="RGD"/>
</dbReference>
<dbReference type="GO" id="GO:0005643">
    <property type="term" value="C:nuclear pore"/>
    <property type="evidence" value="ECO:0000266"/>
    <property type="project" value="RGD"/>
</dbReference>
<dbReference type="GO" id="GO:0042272">
    <property type="term" value="C:nuclear RNA export factor complex"/>
    <property type="evidence" value="ECO:0000266"/>
    <property type="project" value="RGD"/>
</dbReference>
<dbReference type="GO" id="GO:0016607">
    <property type="term" value="C:nuclear speck"/>
    <property type="evidence" value="ECO:0000250"/>
    <property type="project" value="UniProtKB"/>
</dbReference>
<dbReference type="GO" id="GO:0005634">
    <property type="term" value="C:nucleus"/>
    <property type="evidence" value="ECO:0000266"/>
    <property type="project" value="RGD"/>
</dbReference>
<dbReference type="GO" id="GO:0000346">
    <property type="term" value="C:transcription export complex"/>
    <property type="evidence" value="ECO:0000266"/>
    <property type="project" value="RGD"/>
</dbReference>
<dbReference type="GO" id="GO:0003729">
    <property type="term" value="F:mRNA binding"/>
    <property type="evidence" value="ECO:0000266"/>
    <property type="project" value="RGD"/>
</dbReference>
<dbReference type="GO" id="GO:0003723">
    <property type="term" value="F:RNA binding"/>
    <property type="evidence" value="ECO:0000266"/>
    <property type="project" value="RGD"/>
</dbReference>
<dbReference type="GO" id="GO:0006406">
    <property type="term" value="P:mRNA export from nucleus"/>
    <property type="evidence" value="ECO:0000250"/>
    <property type="project" value="UniProtKB"/>
</dbReference>
<dbReference type="GO" id="GO:0016973">
    <property type="term" value="P:poly(A)+ mRNA export from nucleus"/>
    <property type="evidence" value="ECO:0000266"/>
    <property type="project" value="RGD"/>
</dbReference>
<dbReference type="GO" id="GO:0015031">
    <property type="term" value="P:protein transport"/>
    <property type="evidence" value="ECO:0007669"/>
    <property type="project" value="UniProtKB-KW"/>
</dbReference>
<dbReference type="GO" id="GO:0006405">
    <property type="term" value="P:RNA export from nucleus"/>
    <property type="evidence" value="ECO:0000266"/>
    <property type="project" value="RGD"/>
</dbReference>
<dbReference type="CDD" id="cd00780">
    <property type="entry name" value="NTF2"/>
    <property type="match status" value="1"/>
</dbReference>
<dbReference type="CDD" id="cd14342">
    <property type="entry name" value="UBA_TAP-C"/>
    <property type="match status" value="1"/>
</dbReference>
<dbReference type="FunFam" id="1.10.8.10:FF:000018">
    <property type="entry name" value="Nuclear RNA export factor 1"/>
    <property type="match status" value="1"/>
</dbReference>
<dbReference type="FunFam" id="3.10.450.50:FF:000004">
    <property type="entry name" value="Nuclear RNA export factor 1"/>
    <property type="match status" value="1"/>
</dbReference>
<dbReference type="FunFam" id="3.80.10.10:FF:000066">
    <property type="entry name" value="Nuclear RNA export factor 1"/>
    <property type="match status" value="1"/>
</dbReference>
<dbReference type="FunFam" id="3.30.70.330:FF:000165">
    <property type="entry name" value="nuclear RNA export factor 1"/>
    <property type="match status" value="1"/>
</dbReference>
<dbReference type="Gene3D" id="3.10.450.50">
    <property type="match status" value="1"/>
</dbReference>
<dbReference type="Gene3D" id="3.30.70.330">
    <property type="match status" value="1"/>
</dbReference>
<dbReference type="Gene3D" id="1.10.8.10">
    <property type="entry name" value="DNA helicase RuvA subunit, C-terminal domain"/>
    <property type="match status" value="1"/>
</dbReference>
<dbReference type="Gene3D" id="3.80.10.10">
    <property type="entry name" value="Ribonuclease Inhibitor"/>
    <property type="match status" value="1"/>
</dbReference>
<dbReference type="InterPro" id="IPR001611">
    <property type="entry name" value="Leu-rich_rpt"/>
</dbReference>
<dbReference type="InterPro" id="IPR032675">
    <property type="entry name" value="LRR_dom_sf"/>
</dbReference>
<dbReference type="InterPro" id="IPR032710">
    <property type="entry name" value="NTF2-like_dom_sf"/>
</dbReference>
<dbReference type="InterPro" id="IPR002075">
    <property type="entry name" value="NTF2_dom"/>
</dbReference>
<dbReference type="InterPro" id="IPR018222">
    <property type="entry name" value="Nuclear_transport_factor_2_euk"/>
</dbReference>
<dbReference type="InterPro" id="IPR012677">
    <property type="entry name" value="Nucleotide-bd_a/b_plait_sf"/>
</dbReference>
<dbReference type="InterPro" id="IPR030217">
    <property type="entry name" value="NXF_fam"/>
</dbReference>
<dbReference type="InterPro" id="IPR035979">
    <property type="entry name" value="RBD_domain_sf"/>
</dbReference>
<dbReference type="InterPro" id="IPR005637">
    <property type="entry name" value="TAP_C_dom"/>
</dbReference>
<dbReference type="InterPro" id="IPR015245">
    <property type="entry name" value="Tap_RNA-bd"/>
</dbReference>
<dbReference type="InterPro" id="IPR009060">
    <property type="entry name" value="UBA-like_sf"/>
</dbReference>
<dbReference type="PANTHER" id="PTHR10662">
    <property type="entry name" value="NUCLEAR RNA EXPORT FACTOR"/>
    <property type="match status" value="1"/>
</dbReference>
<dbReference type="PANTHER" id="PTHR10662:SF27">
    <property type="entry name" value="NUCLEAR RNA EXPORT FACTOR 1"/>
    <property type="match status" value="1"/>
</dbReference>
<dbReference type="Pfam" id="PF24048">
    <property type="entry name" value="LRR_NXF1-5"/>
    <property type="match status" value="1"/>
</dbReference>
<dbReference type="Pfam" id="PF22602">
    <property type="entry name" value="NXF_NTF2"/>
    <property type="match status" value="1"/>
</dbReference>
<dbReference type="Pfam" id="PF09162">
    <property type="entry name" value="Tap-RNA_bind"/>
    <property type="match status" value="1"/>
</dbReference>
<dbReference type="Pfam" id="PF03943">
    <property type="entry name" value="TAP_C"/>
    <property type="match status" value="1"/>
</dbReference>
<dbReference type="SMART" id="SM00804">
    <property type="entry name" value="TAP_C"/>
    <property type="match status" value="1"/>
</dbReference>
<dbReference type="SUPFAM" id="SSF52058">
    <property type="entry name" value="L domain-like"/>
    <property type="match status" value="1"/>
</dbReference>
<dbReference type="SUPFAM" id="SSF54427">
    <property type="entry name" value="NTF2-like"/>
    <property type="match status" value="1"/>
</dbReference>
<dbReference type="SUPFAM" id="SSF54928">
    <property type="entry name" value="RNA-binding domain, RBD"/>
    <property type="match status" value="1"/>
</dbReference>
<dbReference type="SUPFAM" id="SSF46934">
    <property type="entry name" value="UBA-like"/>
    <property type="match status" value="1"/>
</dbReference>
<dbReference type="PROSITE" id="PS51450">
    <property type="entry name" value="LRR"/>
    <property type="match status" value="2"/>
</dbReference>
<dbReference type="PROSITE" id="PS50177">
    <property type="entry name" value="NTF2_DOMAIN"/>
    <property type="match status" value="1"/>
</dbReference>
<dbReference type="PROSITE" id="PS51281">
    <property type="entry name" value="TAP_C"/>
    <property type="match status" value="1"/>
</dbReference>
<comment type="function">
    <text evidence="3">Involved in the nuclear export of mRNA species bearing retroviral constitutive transport elements (CTE) and in the export of mRNA from the nucleus to the cytoplasm (TAP/NFX1 pathway). The NXF1-NXT1 heterodimer is involved in the export of HSP70 mRNA in conjunction with ALYREF/THOC4 and THOC5 components of the TREX complex. ALYREF/THOC4-bound mRNA is thought to be transferred to the NXF1-NXT1 heterodimer for export. Also involved in nuclear export of m6A-containing mRNAs: interaction between SRSF3 and YTHDC1 facilitates m6A-containing mRNA-binding to both SRSF3 and NXF1, promoting mRNA nuclear export.</text>
</comment>
<comment type="subunit">
    <text evidence="2 3">Heterodimer (via NTF2 domain) with NXT1. The formation of NXF1-NXT1 heterodimers is required for the NXF1-mediated nuclear mRNA export. Forms a complex with RANBP2/NUP358, NXT1 and RANGAP1. Associates with the exon junction complex (EJC). Associates with the transcription/export (TREX) complex. Found in a mRNA complex with UPF3A and UPF3B. Found in a post-splicing complex with RBM8A, UPF1, UPF2, UPF3A, UPF3B and RNPS1. Interacts (via N-terminus) with DHX9 (via N-terminus); this interaction is direct and negatively regulates NXF1-mediated nuclear export of constitutive transport element (CTE)-containing cellular mRNAs. Interacts with FYTTD1/UIF. Interacts with EIF4A3. Interacts with NUP42. Interacts with ALYREF/THOC4. Interacts with CHTOP. Interacts with FRG1 (via N-terminus). Interacts with LUZP4. Interacts with FMR1; the interaction occurs in a mRNA-dependent and polyribosomes-independent manner in the nucleus. Interacts with CPSF6 (via N-terminus); this interaction is direct. Interacts with RBM15. Interacts with RBM15B. Interacts with MCM3AP; this interaction is not mediated by RNA (By similarity). Interacts with DDX3X (via C-terminus); this interaction may be partly involved in DDX3X nuclear export and in NXF1 localization to stress granules. Interacts with PABPC1/PABP1 (By similarity).</text>
</comment>
<comment type="subcellular location">
    <subcellularLocation>
        <location evidence="3">Nucleus</location>
        <location evidence="3">Nucleoplasm</location>
    </subcellularLocation>
    <subcellularLocation>
        <location evidence="3">Nucleus speckle</location>
    </subcellularLocation>
    <subcellularLocation>
        <location evidence="3">Nucleus</location>
        <location evidence="3">Nuclear pore complex</location>
    </subcellularLocation>
    <subcellularLocation>
        <location evidence="3">Nucleus envelope</location>
    </subcellularLocation>
    <subcellularLocation>
        <location evidence="3">Cytoplasm</location>
    </subcellularLocation>
    <subcellularLocation>
        <location evidence="3">Cytoplasm</location>
        <location evidence="3">Stress granule</location>
    </subcellularLocation>
    <text evidence="3">Localized predominantly in the nucleoplasm and at both the nucleoplasmic and cytoplasmic faces of the nuclear pore complex. Shuttles between the nucleus and the cytoplasm. Travels to the cytoplasm as part of the exon junction complex (EJC) bound to mRNA. The association with the TREX complex seems to occur in regions surrounding nuclear speckles known as perispeckles. Nucleus; nuclear rim.</text>
</comment>
<comment type="domain">
    <text evidence="3">The minimal CTE binding domain consists of an RNP-type RNA binding domain (RBD) and leucine-rich repeats.</text>
</comment>
<comment type="domain">
    <text evidence="3">The nucleoporin binding domain consists of a NTF2 domain (also called NTF2-like domain) and a TAP-C domain (also called UBA-like domain). It has 2 nucleoporin-FG-repeats binding sites (one in the NTF2 and the other in the TAP-C domain) which contribute to nucleoporin association and act synergistically to export cellular mRNAs.</text>
</comment>
<comment type="domain">
    <text evidence="3">The NTF2 domain is functional only in the presence of NXT1 and is essential for the export of mRNA from the nucleus. It inhibits RNA binding activity through an intramolecular interaction with the N-terminal RNA binding domain (RBD); the inhibition is removed by an association with the TREX complex, specifically involving ALYREF/THOC4 and THOC5.</text>
</comment>
<comment type="domain">
    <text evidence="3">The TAP-C domain mediates direct interactions with nucleoporin-FG-repeats and is necessary and sufficient for localization of NXF1 to the nuclear rim. The conserved loop 594-NWD-596 of the TAP-C domain has a critical role in the interaction with nucleoporins.</text>
</comment>
<comment type="domain">
    <text evidence="3">The leucine-rich repeats are essential for the export of mRNA from the nucleus.</text>
</comment>
<comment type="domain">
    <text evidence="3">The RNA-binding domain is a non-canonical RNP-type domain.</text>
</comment>
<comment type="similarity">
    <text evidence="7">Belongs to the NXF family.</text>
</comment>
<feature type="initiator methionine" description="Removed" evidence="3">
    <location>
        <position position="1"/>
    </location>
</feature>
<feature type="chain" id="PRO_0000220531" description="Nuclear RNA export factor 1">
    <location>
        <begin position="2"/>
        <end position="618"/>
    </location>
</feature>
<feature type="domain" description="RRM">
    <location>
        <begin position="118"/>
        <end position="197"/>
    </location>
</feature>
<feature type="repeat" description="LRR 1">
    <location>
        <begin position="265"/>
        <end position="290"/>
    </location>
</feature>
<feature type="repeat" description="LRR 2">
    <location>
        <begin position="291"/>
        <end position="314"/>
    </location>
</feature>
<feature type="repeat" description="LRR 3">
    <location>
        <begin position="315"/>
        <end position="342"/>
    </location>
</feature>
<feature type="repeat" description="LRR 4">
    <location>
        <begin position="343"/>
        <end position="370"/>
    </location>
</feature>
<feature type="domain" description="NTF2" evidence="4">
    <location>
        <begin position="385"/>
        <end position="535"/>
    </location>
</feature>
<feature type="domain" description="TAP-C" evidence="5">
    <location>
        <begin position="564"/>
        <end position="618"/>
    </location>
</feature>
<feature type="region of interest" description="Disordered" evidence="6">
    <location>
        <begin position="1"/>
        <end position="113"/>
    </location>
</feature>
<feature type="region of interest" description="Interaction with ALYREF/THOC4 and LUZP4" evidence="3">
    <location>
        <begin position="2"/>
        <end position="197"/>
    </location>
</feature>
<feature type="region of interest" description="RNA-binding (RBD)" evidence="1">
    <location>
        <begin position="2"/>
        <end position="117"/>
    </location>
</feature>
<feature type="region of interest" description="Minor non-specific RNA-binding" evidence="1">
    <location>
        <begin position="2"/>
        <end position="59"/>
    </location>
</feature>
<feature type="region of interest" description="Major non-specific RNA-binding" evidence="1">
    <location>
        <begin position="60"/>
        <end position="117"/>
    </location>
</feature>
<feature type="region of interest" description="RNA binding" evidence="1">
    <location>
        <begin position="60"/>
        <end position="117"/>
    </location>
</feature>
<feature type="short sequence motif" description="Nuclear localization signal" evidence="1">
    <location>
        <begin position="66"/>
        <end position="99"/>
    </location>
</feature>
<feature type="short sequence motif" description="Nuclear export signal" evidence="1">
    <location>
        <begin position="82"/>
        <end position="109"/>
    </location>
</feature>
<feature type="compositionally biased region" description="Basic and acidic residues" evidence="6">
    <location>
        <begin position="1"/>
        <end position="15"/>
    </location>
</feature>
<feature type="compositionally biased region" description="Basic residues" evidence="6">
    <location>
        <begin position="19"/>
        <end position="28"/>
    </location>
</feature>
<feature type="compositionally biased region" description="Basic and acidic residues" evidence="6">
    <location>
        <begin position="81"/>
        <end position="102"/>
    </location>
</feature>
<feature type="modified residue" description="N-acetylalanine" evidence="3">
    <location>
        <position position="2"/>
    </location>
</feature>
<feature type="modified residue" description="Asymmetric dimethylarginine; alternate" evidence="2">
    <location>
        <position position="41"/>
    </location>
</feature>
<feature type="modified residue" description="Omega-N-methylarginine; alternate" evidence="2">
    <location>
        <position position="41"/>
    </location>
</feature>
<feature type="modified residue" description="3'-nitrotyrosine" evidence="2">
    <location>
        <position position="125"/>
    </location>
</feature>
<accession>O88984</accession>
<sequence length="618" mass="70362">MADEGKSYNEHDDRVSFPQRRKKGRGPFRWKCGVGNRRSGRGGSGIRSSRFEEDDGDVAMNDPQDGPRVRFNPYTTRPNRRRDTWHDRDRIHVTVRRDRAPQERGGAGTSQDGTTKNWFKITIPYGKKYDKMWLLSMIQSKCSVPFNPIEFHYENTRAHFFVENATTASALKAVNYKIQDRENGRISIIINSSAPPYIVQNELKPEQVEQLKLIMSKRYDGSQQALDLKGLRSDPDLVAQNIDVVLNRRGCMAAALRIIEENIPELLSLNLSNNRLYKLDDMSSIVQKAPNLKILNLSGNELKSEWELDKIKGLKLEELWLDRNPMCDTFLDQSTYISTIRERFPKLLRLDGHELPPPIAFDVEAPTMLPPCKGSYFGTENLKSLVLHFLQQYYAIYDSGDRQGLLDAYHDGACCSLSTPSNPQNPVRHNLAKYFNDSRNVKKIKDTTTRFRLLKHTRLNVVAFLNELPKTHHDVNSFVVDISAQTSTLLCFSVNGVFKEVDGKSRDSLRAFTRTFIAVPASNSGLCIVNDELFVRNASPEEIQRAFAMPAPTPSSSPVPTLSQEQQDMLQAFSTQSGMNLEWSQKCLQDNNWDYTRSAQAFTHLKAKGEIPEVAFMK</sequence>
<organism>
    <name type="scientific">Rattus norvegicus</name>
    <name type="common">Rat</name>
    <dbReference type="NCBI Taxonomy" id="10116"/>
    <lineage>
        <taxon>Eukaryota</taxon>
        <taxon>Metazoa</taxon>
        <taxon>Chordata</taxon>
        <taxon>Craniata</taxon>
        <taxon>Vertebrata</taxon>
        <taxon>Euteleostomi</taxon>
        <taxon>Mammalia</taxon>
        <taxon>Eutheria</taxon>
        <taxon>Euarchontoglires</taxon>
        <taxon>Glires</taxon>
        <taxon>Rodentia</taxon>
        <taxon>Myomorpha</taxon>
        <taxon>Muroidea</taxon>
        <taxon>Muridae</taxon>
        <taxon>Murinae</taxon>
        <taxon>Rattus</taxon>
    </lineage>
</organism>
<name>NXF1_RAT</name>
<keyword id="KW-0007">Acetylation</keyword>
<keyword id="KW-0963">Cytoplasm</keyword>
<keyword id="KW-0433">Leucine-rich repeat</keyword>
<keyword id="KW-0488">Methylation</keyword>
<keyword id="KW-0509">mRNA transport</keyword>
<keyword id="KW-0944">Nitration</keyword>
<keyword id="KW-0906">Nuclear pore complex</keyword>
<keyword id="KW-0539">Nucleus</keyword>
<keyword id="KW-0653">Protein transport</keyword>
<keyword id="KW-1185">Reference proteome</keyword>
<keyword id="KW-0677">Repeat</keyword>
<keyword id="KW-0694">RNA-binding</keyword>
<keyword id="KW-0811">Translocation</keyword>
<keyword id="KW-0813">Transport</keyword>
<proteinExistence type="evidence at transcript level"/>
<protein>
    <recommendedName>
        <fullName>Nuclear RNA export factor 1</fullName>
    </recommendedName>
    <alternativeName>
        <fullName>Tip-associated protein</fullName>
    </alternativeName>
    <alternativeName>
        <fullName>Tip-associating protein</fullName>
    </alternativeName>
    <alternativeName>
        <fullName>mRNA export factor TAP</fullName>
    </alternativeName>
</protein>
<reference key="1">
    <citation type="submission" date="1998-09" db="EMBL/GenBank/DDBJ databases">
        <authorList>
            <person name="Tannoch V.J."/>
            <person name="Cormier-Regard S."/>
            <person name="Claycomb W.C."/>
        </authorList>
    </citation>
    <scope>NUCLEOTIDE SEQUENCE [MRNA]</scope>
    <source>
        <strain>Sprague-Dawley</strain>
        <tissue>Heart ventricle</tissue>
    </source>
</reference>
<gene>
    <name type="primary">Nxf1</name>
    <name type="synonym">Tap</name>
</gene>
<evidence type="ECO:0000250" key="1"/>
<evidence type="ECO:0000250" key="2">
    <source>
        <dbReference type="UniProtKB" id="Q99JX7"/>
    </source>
</evidence>
<evidence type="ECO:0000250" key="3">
    <source>
        <dbReference type="UniProtKB" id="Q9UBU9"/>
    </source>
</evidence>
<evidence type="ECO:0000255" key="4">
    <source>
        <dbReference type="PROSITE-ProRule" id="PRU00137"/>
    </source>
</evidence>
<evidence type="ECO:0000255" key="5">
    <source>
        <dbReference type="PROSITE-ProRule" id="PRU00611"/>
    </source>
</evidence>
<evidence type="ECO:0000256" key="6">
    <source>
        <dbReference type="SAM" id="MobiDB-lite"/>
    </source>
</evidence>
<evidence type="ECO:0000305" key="7"/>